<reference key="1">
    <citation type="journal article" date="2004" name="Science">
        <title>The complete genome sequence of Propionibacterium acnes, a commensal of human skin.</title>
        <authorList>
            <person name="Brueggemann H."/>
            <person name="Henne A."/>
            <person name="Hoster F."/>
            <person name="Liesegang H."/>
            <person name="Wiezer A."/>
            <person name="Strittmatter A."/>
            <person name="Hujer S."/>
            <person name="Duerre P."/>
            <person name="Gottschalk G."/>
        </authorList>
    </citation>
    <scope>NUCLEOTIDE SEQUENCE [LARGE SCALE GENOMIC DNA]</scope>
    <source>
        <strain>DSM 16379 / KPA171202</strain>
    </source>
</reference>
<evidence type="ECO:0000255" key="1">
    <source>
        <dbReference type="HAMAP-Rule" id="MF_01333"/>
    </source>
</evidence>
<evidence type="ECO:0000256" key="2">
    <source>
        <dbReference type="SAM" id="MobiDB-lite"/>
    </source>
</evidence>
<evidence type="ECO:0000305" key="3"/>
<evidence type="ECO:0007829" key="4">
    <source>
        <dbReference type="PDB" id="8CVM"/>
    </source>
</evidence>
<feature type="chain" id="PRO_0000243040" description="Large ribosomal subunit protein uL5">
    <location>
        <begin position="1"/>
        <end position="210"/>
    </location>
</feature>
<feature type="region of interest" description="Disordered" evidence="2">
    <location>
        <begin position="188"/>
        <end position="210"/>
    </location>
</feature>
<feature type="compositionally biased region" description="Basic residues" evidence="2">
    <location>
        <begin position="195"/>
        <end position="210"/>
    </location>
</feature>
<feature type="helix" evidence="4">
    <location>
        <begin position="12"/>
        <end position="29"/>
    </location>
</feature>
<feature type="helix" evidence="4">
    <location>
        <begin position="34"/>
        <end position="36"/>
    </location>
</feature>
<feature type="strand" evidence="4">
    <location>
        <begin position="40"/>
        <end position="48"/>
    </location>
</feature>
<feature type="helix" evidence="4">
    <location>
        <begin position="57"/>
        <end position="70"/>
    </location>
</feature>
<feature type="strand" evidence="4">
    <location>
        <begin position="75"/>
        <end position="78"/>
    </location>
</feature>
<feature type="turn" evidence="4">
    <location>
        <begin position="84"/>
        <end position="87"/>
    </location>
</feature>
<feature type="strand" evidence="4">
    <location>
        <begin position="93"/>
        <end position="100"/>
    </location>
</feature>
<feature type="helix" evidence="4">
    <location>
        <begin position="102"/>
        <end position="115"/>
    </location>
</feature>
<feature type="helix" evidence="4">
    <location>
        <begin position="117"/>
        <end position="119"/>
    </location>
</feature>
<feature type="strand" evidence="4">
    <location>
        <begin position="133"/>
        <end position="135"/>
    </location>
</feature>
<feature type="strand" evidence="4">
    <location>
        <begin position="137"/>
        <end position="142"/>
    </location>
</feature>
<feature type="strand" evidence="4">
    <location>
        <begin position="161"/>
        <end position="168"/>
    </location>
</feature>
<feature type="helix" evidence="4">
    <location>
        <begin position="172"/>
        <end position="182"/>
    </location>
</feature>
<feature type="helix" evidence="4">
    <location>
        <begin position="190"/>
        <end position="204"/>
    </location>
</feature>
<sequence>MSTDAIAHEMPRLKKQYREQIRAAMQEEFGYRNPMLIPGLEKIVVNMGVGDAAHDSKVMDGAIRDITAITGQKPQVTKARKSIAQFKLREGQPIGCHVTLRGDRMWEFADRLLTLALPRIRDFRGLNSNQFDGKGNYTFGLSEQVMFLEIDQDKIVRIRGMDITFVTTAQTNEEGKALLKHLGFPFKAKDDPKKAKTKRGPAYYAKKKKK</sequence>
<protein>
    <recommendedName>
        <fullName evidence="1">Large ribosomal subunit protein uL5</fullName>
    </recommendedName>
    <alternativeName>
        <fullName evidence="3">50S ribosomal protein L5</fullName>
    </alternativeName>
</protein>
<comment type="function">
    <text evidence="1">This is one of the proteins that bind and probably mediate the attachment of the 5S RNA into the large ribosomal subunit, where it forms part of the central protuberance. In the 70S ribosome it contacts protein S13 of the 30S subunit (bridge B1b), connecting the 2 subunits; this bridge is implicated in subunit movement. Contacts the P site tRNA; the 5S rRNA and some of its associated proteins might help stabilize positioning of ribosome-bound tRNAs.</text>
</comment>
<comment type="subunit">
    <text evidence="1">Part of the 50S ribosomal subunit; part of the 5S rRNA/L5/L18/L25 subcomplex. Contacts the 5S rRNA and the P site tRNA. Forms a bridge to the 30S subunit in the 70S ribosome.</text>
</comment>
<comment type="similarity">
    <text evidence="1">Belongs to the universal ribosomal protein uL5 family.</text>
</comment>
<gene>
    <name evidence="1" type="primary">rplE</name>
    <name type="ordered locus">PPA1850</name>
</gene>
<dbReference type="EMBL" id="AE017283">
    <property type="protein sequence ID" value="AAT83575.1"/>
    <property type="molecule type" value="Genomic_DNA"/>
</dbReference>
<dbReference type="RefSeq" id="WP_011183934.1">
    <property type="nucleotide sequence ID" value="NZ_CP025935.1"/>
</dbReference>
<dbReference type="PDB" id="8CVM">
    <property type="method" value="EM"/>
    <property type="resolution" value="2.66 A"/>
    <property type="chains" value="f=1-210"/>
</dbReference>
<dbReference type="PDBsum" id="8CVM"/>
<dbReference type="SMR" id="Q6A6N8"/>
<dbReference type="EnsemblBacteria" id="AAT83575">
    <property type="protein sequence ID" value="AAT83575"/>
    <property type="gene ID" value="PPA1850"/>
</dbReference>
<dbReference type="KEGG" id="pac:PPA1850"/>
<dbReference type="PATRIC" id="fig|267747.3.peg.1906"/>
<dbReference type="eggNOG" id="COG0094">
    <property type="taxonomic scope" value="Bacteria"/>
</dbReference>
<dbReference type="HOGENOM" id="CLU_061015_2_1_11"/>
<dbReference type="Proteomes" id="UP000000603">
    <property type="component" value="Chromosome"/>
</dbReference>
<dbReference type="GO" id="GO:1990904">
    <property type="term" value="C:ribonucleoprotein complex"/>
    <property type="evidence" value="ECO:0007669"/>
    <property type="project" value="UniProtKB-KW"/>
</dbReference>
<dbReference type="GO" id="GO:0005840">
    <property type="term" value="C:ribosome"/>
    <property type="evidence" value="ECO:0007669"/>
    <property type="project" value="UniProtKB-KW"/>
</dbReference>
<dbReference type="GO" id="GO:0019843">
    <property type="term" value="F:rRNA binding"/>
    <property type="evidence" value="ECO:0007669"/>
    <property type="project" value="UniProtKB-UniRule"/>
</dbReference>
<dbReference type="GO" id="GO:0003735">
    <property type="term" value="F:structural constituent of ribosome"/>
    <property type="evidence" value="ECO:0007669"/>
    <property type="project" value="InterPro"/>
</dbReference>
<dbReference type="GO" id="GO:0000049">
    <property type="term" value="F:tRNA binding"/>
    <property type="evidence" value="ECO:0007669"/>
    <property type="project" value="UniProtKB-UniRule"/>
</dbReference>
<dbReference type="GO" id="GO:0006412">
    <property type="term" value="P:translation"/>
    <property type="evidence" value="ECO:0007669"/>
    <property type="project" value="UniProtKB-UniRule"/>
</dbReference>
<dbReference type="FunFam" id="3.30.1440.10:FF:000001">
    <property type="entry name" value="50S ribosomal protein L5"/>
    <property type="match status" value="1"/>
</dbReference>
<dbReference type="Gene3D" id="3.30.1440.10">
    <property type="match status" value="1"/>
</dbReference>
<dbReference type="HAMAP" id="MF_01333_B">
    <property type="entry name" value="Ribosomal_uL5_B"/>
    <property type="match status" value="1"/>
</dbReference>
<dbReference type="InterPro" id="IPR002132">
    <property type="entry name" value="Ribosomal_uL5"/>
</dbReference>
<dbReference type="InterPro" id="IPR020930">
    <property type="entry name" value="Ribosomal_uL5_bac-type"/>
</dbReference>
<dbReference type="InterPro" id="IPR031309">
    <property type="entry name" value="Ribosomal_uL5_C"/>
</dbReference>
<dbReference type="InterPro" id="IPR022803">
    <property type="entry name" value="Ribosomal_uL5_dom_sf"/>
</dbReference>
<dbReference type="InterPro" id="IPR031310">
    <property type="entry name" value="Ribosomal_uL5_N"/>
</dbReference>
<dbReference type="NCBIfam" id="NF000585">
    <property type="entry name" value="PRK00010.1"/>
    <property type="match status" value="1"/>
</dbReference>
<dbReference type="PANTHER" id="PTHR11994">
    <property type="entry name" value="60S RIBOSOMAL PROTEIN L11-RELATED"/>
    <property type="match status" value="1"/>
</dbReference>
<dbReference type="Pfam" id="PF00281">
    <property type="entry name" value="Ribosomal_L5"/>
    <property type="match status" value="1"/>
</dbReference>
<dbReference type="Pfam" id="PF00673">
    <property type="entry name" value="Ribosomal_L5_C"/>
    <property type="match status" value="1"/>
</dbReference>
<dbReference type="PIRSF" id="PIRSF002161">
    <property type="entry name" value="Ribosomal_L5"/>
    <property type="match status" value="1"/>
</dbReference>
<dbReference type="SUPFAM" id="SSF55282">
    <property type="entry name" value="RL5-like"/>
    <property type="match status" value="1"/>
</dbReference>
<proteinExistence type="evidence at protein level"/>
<name>RL5_CUTAK</name>
<accession>Q6A6N8</accession>
<organism>
    <name type="scientific">Cutibacterium acnes (strain DSM 16379 / KPA171202)</name>
    <name type="common">Propionibacterium acnes</name>
    <dbReference type="NCBI Taxonomy" id="267747"/>
    <lineage>
        <taxon>Bacteria</taxon>
        <taxon>Bacillati</taxon>
        <taxon>Actinomycetota</taxon>
        <taxon>Actinomycetes</taxon>
        <taxon>Propionibacteriales</taxon>
        <taxon>Propionibacteriaceae</taxon>
        <taxon>Cutibacterium</taxon>
    </lineage>
</organism>
<keyword id="KW-0002">3D-structure</keyword>
<keyword id="KW-0687">Ribonucleoprotein</keyword>
<keyword id="KW-0689">Ribosomal protein</keyword>
<keyword id="KW-0694">RNA-binding</keyword>
<keyword id="KW-0699">rRNA-binding</keyword>
<keyword id="KW-0820">tRNA-binding</keyword>